<proteinExistence type="evidence at protein level"/>
<evidence type="ECO:0000250" key="1">
    <source>
        <dbReference type="UniProtKB" id="Q9DA75"/>
    </source>
</evidence>
<evidence type="ECO:0000255" key="2"/>
<evidence type="ECO:0000256" key="3">
    <source>
        <dbReference type="SAM" id="MobiDB-lite"/>
    </source>
</evidence>
<evidence type="ECO:0000269" key="4">
    <source>
    </source>
</evidence>
<evidence type="ECO:0000305" key="5"/>
<evidence type="ECO:0007829" key="6">
    <source>
        <dbReference type="PDB" id="8D2S"/>
    </source>
</evidence>
<evidence type="ECO:0007829" key="7">
    <source>
        <dbReference type="PDB" id="8D2T"/>
    </source>
</evidence>
<evidence type="ECO:0007829" key="8">
    <source>
        <dbReference type="PDB" id="8D2U"/>
    </source>
</evidence>
<evidence type="ECO:0007829" key="9">
    <source>
        <dbReference type="PDB" id="8D2X"/>
    </source>
</evidence>
<keyword id="KW-0002">3D-structure</keyword>
<keyword id="KW-1003">Cell membrane</keyword>
<keyword id="KW-1015">Disulfide bond</keyword>
<keyword id="KW-0256">Endoplasmic reticulum</keyword>
<keyword id="KW-0325">Glycoprotein</keyword>
<keyword id="KW-0445">Lipid transport</keyword>
<keyword id="KW-0472">Membrane</keyword>
<keyword id="KW-1185">Reference proteome</keyword>
<keyword id="KW-0769">Symport</keyword>
<keyword id="KW-0812">Transmembrane</keyword>
<keyword id="KW-1133">Transmembrane helix</keyword>
<keyword id="KW-0813">Transport</keyword>
<comment type="function">
    <text evidence="1">Sodium-dependent lysophosphatidylcholine (LPC) symporter, which plays an essential role for blood-brain barrier formation and function. Specifically expressed in endothelium of the blood-brain barrier of micro-vessels and transports LPC into the brain. Transport of LPC is essential because it constitutes the major mechanism by which docosahexaenoic acid (DHA), an omega-3 fatty acid that is essential for normal brain growth and cognitive function, enters the brain. Transports LPC carrying long-chain fatty acids such LPC oleate and LPC palmitate with a minimum acyl chain length of 14 carbons. Does not transport docosahexaenoic acid in unesterified fatty acid.</text>
</comment>
<comment type="catalytic activity">
    <reaction evidence="1">
        <text>a 1-acyl-sn-glycero-3-phosphocholine(in) + Na(+)(in) = a 1-acyl-sn-glycero-3-phosphocholine(out) + Na(+)(out)</text>
        <dbReference type="Rhea" id="RHEA:44376"/>
        <dbReference type="ChEBI" id="CHEBI:29101"/>
        <dbReference type="ChEBI" id="CHEBI:58168"/>
    </reaction>
</comment>
<comment type="catalytic activity">
    <reaction evidence="1">
        <text>1-(4Z,7Z,10Z,13Z,16Z,19Z-docosahexaenoyl)-sn-glycero-3-phosphocholine(in) + Na(+)(in) = 1-(4Z,7Z,10Z,13Z,16Z,19Z-docosahexaenoyl)-sn-glycero-3-phosphocholine(out) + Na(+)(out)</text>
        <dbReference type="Rhea" id="RHEA:43860"/>
        <dbReference type="ChEBI" id="CHEBI:29101"/>
        <dbReference type="ChEBI" id="CHEBI:73873"/>
    </reaction>
</comment>
<comment type="catalytic activity">
    <reaction evidence="1">
        <text>1-(9Z-octadecenoyl)-sn-glycero-3-phosphocholine(in) + Na(+)(in) = 1-(9Z-octadecenoyl)-sn-glycero-3-phosphocholine(out) + Na(+)(out)</text>
        <dbReference type="Rhea" id="RHEA:43856"/>
        <dbReference type="ChEBI" id="CHEBI:28610"/>
        <dbReference type="ChEBI" id="CHEBI:29101"/>
    </reaction>
</comment>
<comment type="catalytic activity">
    <reaction evidence="1">
        <text>1-hexadecanoyl-sn-glycero-3-phosphocholine(in) + Na(+)(in) = 1-hexadecanoyl-sn-glycero-3-phosphocholine(out) + Na(+)(out)</text>
        <dbReference type="Rhea" id="RHEA:43864"/>
        <dbReference type="ChEBI" id="CHEBI:29101"/>
        <dbReference type="ChEBI" id="CHEBI:72998"/>
    </reaction>
</comment>
<comment type="catalytic activity">
    <reaction evidence="1">
        <text>a 1-acyl-sn-glycero-3-phosphoethanolamine(in) + Na(+)(in) = a 1-acyl-sn-glycero-3-phosphoethanolamine(out) + Na(+)(out)</text>
        <dbReference type="Rhea" id="RHEA:43868"/>
        <dbReference type="ChEBI" id="CHEBI:29101"/>
        <dbReference type="ChEBI" id="CHEBI:64381"/>
    </reaction>
</comment>
<comment type="subcellular location">
    <subcellularLocation>
        <location evidence="1">Cell membrane</location>
        <topology evidence="2">Multi-pass membrane protein</topology>
    </subcellularLocation>
    <subcellularLocation>
        <location evidence="1">Endoplasmic reticulum membrane</location>
        <topology evidence="2">Multi-pass membrane protein</topology>
    </subcellularLocation>
</comment>
<comment type="tissue specificity">
    <text evidence="4">Expressed in the developing nervous system.</text>
</comment>
<comment type="disruption phenotype">
    <text evidence="4">Morpholino knockdown of the gene results in early postnatal lethality.</text>
</comment>
<comment type="similarity">
    <text evidence="5">Belongs to the major facilitator superfamily.</text>
</comment>
<dbReference type="EMBL" id="BX000986">
    <property type="protein sequence ID" value="CAK04464.1"/>
    <property type="molecule type" value="Genomic_DNA"/>
</dbReference>
<dbReference type="EMBL" id="BX547927">
    <property type="protein sequence ID" value="CAK04287.1"/>
    <property type="molecule type" value="Genomic_DNA"/>
</dbReference>
<dbReference type="EMBL" id="BC077117">
    <property type="protein sequence ID" value="AAH77117.1"/>
    <property type="molecule type" value="mRNA"/>
</dbReference>
<dbReference type="RefSeq" id="NP_001003570.1">
    <property type="nucleotide sequence ID" value="NM_001003570.2"/>
</dbReference>
<dbReference type="PDB" id="8D2S">
    <property type="method" value="EM"/>
    <property type="resolution" value="2.90 A"/>
    <property type="chains" value="A=22-509"/>
</dbReference>
<dbReference type="PDB" id="8D2T">
    <property type="method" value="EM"/>
    <property type="resolution" value="3.40 A"/>
    <property type="chains" value="A=22-509"/>
</dbReference>
<dbReference type="PDB" id="8D2U">
    <property type="method" value="EM"/>
    <property type="resolution" value="3.30 A"/>
    <property type="chains" value="A=22-509"/>
</dbReference>
<dbReference type="PDB" id="8D2V">
    <property type="method" value="EM"/>
    <property type="resolution" value="4.10 A"/>
    <property type="chains" value="A=22-509"/>
</dbReference>
<dbReference type="PDB" id="8D2W">
    <property type="method" value="EM"/>
    <property type="resolution" value="3.40 A"/>
    <property type="chains" value="A=22-509"/>
</dbReference>
<dbReference type="PDB" id="8D2X">
    <property type="method" value="EM"/>
    <property type="resolution" value="3.40 A"/>
    <property type="chains" value="A=22-509"/>
</dbReference>
<dbReference type="PDBsum" id="8D2S"/>
<dbReference type="PDBsum" id="8D2T"/>
<dbReference type="PDBsum" id="8D2U"/>
<dbReference type="PDBsum" id="8D2V"/>
<dbReference type="PDBsum" id="8D2W"/>
<dbReference type="PDBsum" id="8D2X"/>
<dbReference type="EMDB" id="EMD-27148"/>
<dbReference type="EMDB" id="EMD-27149"/>
<dbReference type="EMDB" id="EMD-27150"/>
<dbReference type="EMDB" id="EMD-27151"/>
<dbReference type="EMDB" id="EMD-27152"/>
<dbReference type="EMDB" id="EMD-27153"/>
<dbReference type="SMR" id="Q6DEJ6"/>
<dbReference type="FunCoup" id="Q6DEJ6">
    <property type="interactions" value="4"/>
</dbReference>
<dbReference type="STRING" id="7955.ENSDARP00000047460"/>
<dbReference type="GlyCosmos" id="Q6DEJ6">
    <property type="glycosylation" value="2 sites, No reported glycans"/>
</dbReference>
<dbReference type="PaxDb" id="7955-ENSDARP00000047460"/>
<dbReference type="Ensembl" id="ENSDART00000047461">
    <property type="protein sequence ID" value="ENSDARP00000047460"/>
    <property type="gene ID" value="ENSDARG00000035909"/>
</dbReference>
<dbReference type="GeneID" id="445176"/>
<dbReference type="KEGG" id="dre:445176"/>
<dbReference type="AGR" id="ZFIN:ZDB-GENE-040801-89"/>
<dbReference type="CTD" id="445176"/>
<dbReference type="ZFIN" id="ZDB-GENE-040801-89">
    <property type="gene designation" value="mfsd2ab"/>
</dbReference>
<dbReference type="eggNOG" id="KOG4830">
    <property type="taxonomic scope" value="Eukaryota"/>
</dbReference>
<dbReference type="HOGENOM" id="CLU_027408_6_1_1"/>
<dbReference type="InParanoid" id="Q6DEJ6"/>
<dbReference type="OMA" id="AFAIGFN"/>
<dbReference type="OrthoDB" id="197206at2759"/>
<dbReference type="PhylomeDB" id="Q6DEJ6"/>
<dbReference type="TreeFam" id="TF331194"/>
<dbReference type="Reactome" id="R-DRE-1483191">
    <property type="pathway name" value="Synthesis of PC"/>
</dbReference>
<dbReference type="PRO" id="PR:Q6DEJ6"/>
<dbReference type="Proteomes" id="UP000000437">
    <property type="component" value="Alternate scaffold 19"/>
</dbReference>
<dbReference type="Proteomes" id="UP000000437">
    <property type="component" value="Chromosome 19"/>
</dbReference>
<dbReference type="Bgee" id="ENSDARG00000035909">
    <property type="expression patterns" value="Expressed in liver and 22 other cell types or tissues"/>
</dbReference>
<dbReference type="GO" id="GO:0005789">
    <property type="term" value="C:endoplasmic reticulum membrane"/>
    <property type="evidence" value="ECO:0007669"/>
    <property type="project" value="UniProtKB-SubCell"/>
</dbReference>
<dbReference type="GO" id="GO:0005886">
    <property type="term" value="C:plasma membrane"/>
    <property type="evidence" value="ECO:0000250"/>
    <property type="project" value="UniProtKB"/>
</dbReference>
<dbReference type="GO" id="GO:0015245">
    <property type="term" value="F:fatty acid transmembrane transporter activity"/>
    <property type="evidence" value="ECO:0000318"/>
    <property type="project" value="GO_Central"/>
</dbReference>
<dbReference type="GO" id="GO:0051978">
    <property type="term" value="F:lysophospholipid:sodium symporter activity"/>
    <property type="evidence" value="ECO:0000250"/>
    <property type="project" value="UniProtKB"/>
</dbReference>
<dbReference type="GO" id="GO:0015293">
    <property type="term" value="F:symporter activity"/>
    <property type="evidence" value="ECO:0000250"/>
    <property type="project" value="UniProtKB"/>
</dbReference>
<dbReference type="GO" id="GO:0008643">
    <property type="term" value="P:carbohydrate transport"/>
    <property type="evidence" value="ECO:0007669"/>
    <property type="project" value="InterPro"/>
</dbReference>
<dbReference type="GO" id="GO:0060856">
    <property type="term" value="P:establishment of blood-brain barrier"/>
    <property type="evidence" value="ECO:0000250"/>
    <property type="project" value="UniProtKB"/>
</dbReference>
<dbReference type="GO" id="GO:0015908">
    <property type="term" value="P:fatty acid transport"/>
    <property type="evidence" value="ECO:0000250"/>
    <property type="project" value="UniProtKB"/>
</dbReference>
<dbReference type="GO" id="GO:1990379">
    <property type="term" value="P:lipid transport across blood-brain barrier"/>
    <property type="evidence" value="ECO:0000250"/>
    <property type="project" value="UniProtKB"/>
</dbReference>
<dbReference type="GO" id="GO:0140329">
    <property type="term" value="P:lysophospholipid translocation"/>
    <property type="evidence" value="ECO:0000318"/>
    <property type="project" value="GO_Central"/>
</dbReference>
<dbReference type="GO" id="GO:0051977">
    <property type="term" value="P:lysophospholipid transport"/>
    <property type="evidence" value="ECO:0000314"/>
    <property type="project" value="ZFIN"/>
</dbReference>
<dbReference type="GO" id="GO:0045056">
    <property type="term" value="P:transcytosis"/>
    <property type="evidence" value="ECO:0000250"/>
    <property type="project" value="UniProtKB"/>
</dbReference>
<dbReference type="GO" id="GO:0055085">
    <property type="term" value="P:transmembrane transport"/>
    <property type="evidence" value="ECO:0000318"/>
    <property type="project" value="GO_Central"/>
</dbReference>
<dbReference type="CDD" id="cd17451">
    <property type="entry name" value="MFS_NLS1_MFSD2A"/>
    <property type="match status" value="1"/>
</dbReference>
<dbReference type="FunFam" id="1.20.1250.20:FF:000185">
    <property type="entry name" value="sodium-dependent lysophosphatidylcholine symporter 1 isoform X1"/>
    <property type="match status" value="1"/>
</dbReference>
<dbReference type="FunFam" id="1.20.1250.20:FF:000183">
    <property type="entry name" value="sodium-dependent lysophosphatidylcholine symporter 1 isoform X2"/>
    <property type="match status" value="1"/>
</dbReference>
<dbReference type="Gene3D" id="1.20.1250.20">
    <property type="entry name" value="MFS general substrate transporter like domains"/>
    <property type="match status" value="1"/>
</dbReference>
<dbReference type="InterPro" id="IPR039672">
    <property type="entry name" value="MFS_2"/>
</dbReference>
<dbReference type="InterPro" id="IPR036259">
    <property type="entry name" value="MFS_trans_sf"/>
</dbReference>
<dbReference type="PANTHER" id="PTHR11328">
    <property type="entry name" value="MAJOR FACILITATOR SUPERFAMILY DOMAIN-CONTAINING PROTEIN"/>
    <property type="match status" value="1"/>
</dbReference>
<dbReference type="PANTHER" id="PTHR11328:SF29">
    <property type="entry name" value="SODIUM-DEPENDENT LYSOPHOSPHATIDYLCHOLINE SYMPORTER 1"/>
    <property type="match status" value="1"/>
</dbReference>
<dbReference type="Pfam" id="PF13347">
    <property type="entry name" value="MFS_2"/>
    <property type="match status" value="1"/>
</dbReference>
<dbReference type="SUPFAM" id="SSF103473">
    <property type="entry name" value="MFS general substrate transporter"/>
    <property type="match status" value="1"/>
</dbReference>
<reference key="1">
    <citation type="journal article" date="2013" name="Nature">
        <title>The zebrafish reference genome sequence and its relationship to the human genome.</title>
        <authorList>
            <person name="Howe K."/>
            <person name="Clark M.D."/>
            <person name="Torroja C.F."/>
            <person name="Torrance J."/>
            <person name="Berthelot C."/>
            <person name="Muffato M."/>
            <person name="Collins J.E."/>
            <person name="Humphray S."/>
            <person name="McLaren K."/>
            <person name="Matthews L."/>
            <person name="McLaren S."/>
            <person name="Sealy I."/>
            <person name="Caccamo M."/>
            <person name="Churcher C."/>
            <person name="Scott C."/>
            <person name="Barrett J.C."/>
            <person name="Koch R."/>
            <person name="Rauch G.J."/>
            <person name="White S."/>
            <person name="Chow W."/>
            <person name="Kilian B."/>
            <person name="Quintais L.T."/>
            <person name="Guerra-Assuncao J.A."/>
            <person name="Zhou Y."/>
            <person name="Gu Y."/>
            <person name="Yen J."/>
            <person name="Vogel J.H."/>
            <person name="Eyre T."/>
            <person name="Redmond S."/>
            <person name="Banerjee R."/>
            <person name="Chi J."/>
            <person name="Fu B."/>
            <person name="Langley E."/>
            <person name="Maguire S.F."/>
            <person name="Laird G.K."/>
            <person name="Lloyd D."/>
            <person name="Kenyon E."/>
            <person name="Donaldson S."/>
            <person name="Sehra H."/>
            <person name="Almeida-King J."/>
            <person name="Loveland J."/>
            <person name="Trevanion S."/>
            <person name="Jones M."/>
            <person name="Quail M."/>
            <person name="Willey D."/>
            <person name="Hunt A."/>
            <person name="Burton J."/>
            <person name="Sims S."/>
            <person name="McLay K."/>
            <person name="Plumb B."/>
            <person name="Davis J."/>
            <person name="Clee C."/>
            <person name="Oliver K."/>
            <person name="Clark R."/>
            <person name="Riddle C."/>
            <person name="Elliot D."/>
            <person name="Threadgold G."/>
            <person name="Harden G."/>
            <person name="Ware D."/>
            <person name="Begum S."/>
            <person name="Mortimore B."/>
            <person name="Kerry G."/>
            <person name="Heath P."/>
            <person name="Phillimore B."/>
            <person name="Tracey A."/>
            <person name="Corby N."/>
            <person name="Dunn M."/>
            <person name="Johnson C."/>
            <person name="Wood J."/>
            <person name="Clark S."/>
            <person name="Pelan S."/>
            <person name="Griffiths G."/>
            <person name="Smith M."/>
            <person name="Glithero R."/>
            <person name="Howden P."/>
            <person name="Barker N."/>
            <person name="Lloyd C."/>
            <person name="Stevens C."/>
            <person name="Harley J."/>
            <person name="Holt K."/>
            <person name="Panagiotidis G."/>
            <person name="Lovell J."/>
            <person name="Beasley H."/>
            <person name="Henderson C."/>
            <person name="Gordon D."/>
            <person name="Auger K."/>
            <person name="Wright D."/>
            <person name="Collins J."/>
            <person name="Raisen C."/>
            <person name="Dyer L."/>
            <person name="Leung K."/>
            <person name="Robertson L."/>
            <person name="Ambridge K."/>
            <person name="Leongamornlert D."/>
            <person name="McGuire S."/>
            <person name="Gilderthorp R."/>
            <person name="Griffiths C."/>
            <person name="Manthravadi D."/>
            <person name="Nichol S."/>
            <person name="Barker G."/>
            <person name="Whitehead S."/>
            <person name="Kay M."/>
            <person name="Brown J."/>
            <person name="Murnane C."/>
            <person name="Gray E."/>
            <person name="Humphries M."/>
            <person name="Sycamore N."/>
            <person name="Barker D."/>
            <person name="Saunders D."/>
            <person name="Wallis J."/>
            <person name="Babbage A."/>
            <person name="Hammond S."/>
            <person name="Mashreghi-Mohammadi M."/>
            <person name="Barr L."/>
            <person name="Martin S."/>
            <person name="Wray P."/>
            <person name="Ellington A."/>
            <person name="Matthews N."/>
            <person name="Ellwood M."/>
            <person name="Woodmansey R."/>
            <person name="Clark G."/>
            <person name="Cooper J."/>
            <person name="Tromans A."/>
            <person name="Grafham D."/>
            <person name="Skuce C."/>
            <person name="Pandian R."/>
            <person name="Andrews R."/>
            <person name="Harrison E."/>
            <person name="Kimberley A."/>
            <person name="Garnett J."/>
            <person name="Fosker N."/>
            <person name="Hall R."/>
            <person name="Garner P."/>
            <person name="Kelly D."/>
            <person name="Bird C."/>
            <person name="Palmer S."/>
            <person name="Gehring I."/>
            <person name="Berger A."/>
            <person name="Dooley C.M."/>
            <person name="Ersan-Urun Z."/>
            <person name="Eser C."/>
            <person name="Geiger H."/>
            <person name="Geisler M."/>
            <person name="Karotki L."/>
            <person name="Kirn A."/>
            <person name="Konantz J."/>
            <person name="Konantz M."/>
            <person name="Oberlander M."/>
            <person name="Rudolph-Geiger S."/>
            <person name="Teucke M."/>
            <person name="Lanz C."/>
            <person name="Raddatz G."/>
            <person name="Osoegawa K."/>
            <person name="Zhu B."/>
            <person name="Rapp A."/>
            <person name="Widaa S."/>
            <person name="Langford C."/>
            <person name="Yang F."/>
            <person name="Schuster S.C."/>
            <person name="Carter N.P."/>
            <person name="Harrow J."/>
            <person name="Ning Z."/>
            <person name="Herrero J."/>
            <person name="Searle S.M."/>
            <person name="Enright A."/>
            <person name="Geisler R."/>
            <person name="Plasterk R.H."/>
            <person name="Lee C."/>
            <person name="Westerfield M."/>
            <person name="de Jong P.J."/>
            <person name="Zon L.I."/>
            <person name="Postlethwait J.H."/>
            <person name="Nusslein-Volhard C."/>
            <person name="Hubbard T.J."/>
            <person name="Roest Crollius H."/>
            <person name="Rogers J."/>
            <person name="Stemple D.L."/>
        </authorList>
    </citation>
    <scope>NUCLEOTIDE SEQUENCE [LARGE SCALE GENOMIC DNA]</scope>
    <source>
        <strain>Tuebingen</strain>
    </source>
</reference>
<reference key="2">
    <citation type="submission" date="2004-07" db="EMBL/GenBank/DDBJ databases">
        <authorList>
            <consortium name="NIH - Zebrafish Gene Collection (ZGC) project"/>
        </authorList>
    </citation>
    <scope>NUCLEOTIDE SEQUENCE [LARGE SCALE MRNA]</scope>
    <source>
        <tissue>Embryo</tissue>
    </source>
</reference>
<reference key="3">
    <citation type="journal article" date="2015" name="Nat. Genet.">
        <title>Inactivating mutations in MFSD2A, required for omega-3 fatty acid transport in brain, cause a lethal microcephaly syndrome.</title>
        <authorList>
            <person name="Guemez-Gamboa A."/>
            <person name="Nguyen L.N."/>
            <person name="Yang H."/>
            <person name="Zaki M.S."/>
            <person name="Kara M."/>
            <person name="Ben-Omran T."/>
            <person name="Akizu N."/>
            <person name="Rosti R.O."/>
            <person name="Rosti B."/>
            <person name="Scott E."/>
            <person name="Schroth J."/>
            <person name="Copeland B."/>
            <person name="Vaux K.K."/>
            <person name="Cazenave-Gassiot A."/>
            <person name="Quek D.Q."/>
            <person name="Wong B.H."/>
            <person name="Tan B.C."/>
            <person name="Wenk M.R."/>
            <person name="Gunel M."/>
            <person name="Gabriel S."/>
            <person name="Chi N.C."/>
            <person name="Silver D.L."/>
            <person name="Gleeson J.G."/>
        </authorList>
    </citation>
    <scope>TISSUE SPECIFICITY</scope>
    <scope>DISRUPTION PHENOTYPE</scope>
</reference>
<sequence length="523" mass="57879">MAKGEGAEQYTNTSLLQKPSPDEVKLAKHETKSRLSVCSKLCYAIGGAPYQITGCAIGFFLQIYLLDVALLDPFYASIILFVGRAWDAVTDPTVGFLVSRTPWTRFGRMMPWIVLSTPFAVLCYFLIWYVPSVDQGKVVWYLIFYCCFQTLQTCFHVPYSALTMFISTEQKERDSATAYRMTVEVLGTLIGTAIQGQIVGMANAPCISTEIDLNSTGLEVAPDVNITDPHVSLQDLRNAYMIASGVICAIYVVCAVVLFLGVKEQKDTCRVRTEPMSFFQGICMVMGHGPYAKLVMGFLFTSLAFMLLEGNFALFCIYNLGFRNDFQNVLLVIMLSATLAIPFWQWFLTKFGKKTAVYIGTTSVVPFLISVVLVPSSLAVTYIASFAAGVSVAAAFLLPWSMLPDVVDDFKVQNPESQGHEAIFYSFYVFFTKFASGVSLGVSTLSLDFAGYVTRGCTQPGEVKLTLKILVSAAPIVLIIIGLLIFISYPINEEKRQGNRKLLNEQRENEMDSETDSTELNVV</sequence>
<name>NLS1B_DANRE</name>
<protein>
    <recommendedName>
        <fullName>Sodium-dependent lysophosphatidylcholine symporter 1-B</fullName>
        <shortName>NLS1-B</shortName>
        <shortName>Sodium-dependent LPC symporter 1-B</shortName>
    </recommendedName>
    <alternativeName>
        <fullName>Major facilitator superfamily domain-containing protein 2A-B</fullName>
    </alternativeName>
</protein>
<organism>
    <name type="scientific">Danio rerio</name>
    <name type="common">Zebrafish</name>
    <name type="synonym">Brachydanio rerio</name>
    <dbReference type="NCBI Taxonomy" id="7955"/>
    <lineage>
        <taxon>Eukaryota</taxon>
        <taxon>Metazoa</taxon>
        <taxon>Chordata</taxon>
        <taxon>Craniata</taxon>
        <taxon>Vertebrata</taxon>
        <taxon>Euteleostomi</taxon>
        <taxon>Actinopterygii</taxon>
        <taxon>Neopterygii</taxon>
        <taxon>Teleostei</taxon>
        <taxon>Ostariophysi</taxon>
        <taxon>Cypriniformes</taxon>
        <taxon>Danionidae</taxon>
        <taxon>Danioninae</taxon>
        <taxon>Danio</taxon>
    </lineage>
</organism>
<accession>Q6DEJ6</accession>
<accession>Q1LYS0</accession>
<feature type="chain" id="PRO_0000273389" description="Sodium-dependent lysophosphatidylcholine symporter 1-B">
    <location>
        <begin position="1"/>
        <end position="523"/>
    </location>
</feature>
<feature type="topological domain" description="Cytoplasmic" evidence="1">
    <location>
        <begin position="1"/>
        <end position="34"/>
    </location>
</feature>
<feature type="transmembrane region" description="Helical" evidence="1">
    <location>
        <begin position="35"/>
        <end position="64"/>
    </location>
</feature>
<feature type="topological domain" description="Extracellular" evidence="1">
    <location>
        <begin position="65"/>
        <end position="75"/>
    </location>
</feature>
<feature type="transmembrane region" description="Helical" evidence="1">
    <location>
        <begin position="76"/>
        <end position="96"/>
    </location>
</feature>
<feature type="topological domain" description="Cytoplasmic" evidence="1">
    <location>
        <begin position="97"/>
        <end position="108"/>
    </location>
</feature>
<feature type="transmembrane region" description="Helical" evidence="1">
    <location>
        <begin position="109"/>
        <end position="128"/>
    </location>
</feature>
<feature type="topological domain" description="Extracellular" evidence="1">
    <location>
        <begin position="129"/>
        <end position="138"/>
    </location>
</feature>
<feature type="transmembrane region" description="Helical" evidence="1">
    <location>
        <begin position="139"/>
        <end position="163"/>
    </location>
</feature>
<feature type="topological domain" description="Cytoplasmic" evidence="1">
    <location>
        <begin position="164"/>
        <end position="170"/>
    </location>
</feature>
<feature type="transmembrane region" description="Helical" evidence="1">
    <location>
        <begin position="171"/>
        <end position="202"/>
    </location>
</feature>
<feature type="topological domain" description="Extracellular" evidence="1">
    <location>
        <begin position="203"/>
        <end position="226"/>
    </location>
</feature>
<feature type="transmembrane region" description="Helical" evidence="1">
    <location>
        <begin position="227"/>
        <end position="260"/>
    </location>
</feature>
<feature type="topological domain" description="Cytoplasmic" evidence="1">
    <location>
        <begin position="261"/>
        <end position="290"/>
    </location>
</feature>
<feature type="transmembrane region" description="Helical" evidence="1">
    <location>
        <begin position="291"/>
        <end position="317"/>
    </location>
</feature>
<feature type="topological domain" description="Extracellular" evidence="1">
    <location>
        <begin position="318"/>
        <end position="328"/>
    </location>
</feature>
<feature type="transmembrane region" description="Helical" evidence="1">
    <location>
        <begin position="329"/>
        <end position="347"/>
    </location>
</feature>
<feature type="topological domain" description="Cytoplasmic" evidence="1">
    <location>
        <begin position="348"/>
        <end position="351"/>
    </location>
</feature>
<feature type="transmembrane region" description="Helical" evidence="1">
    <location>
        <begin position="352"/>
        <end position="373"/>
    </location>
</feature>
<feature type="topological domain" description="Extracellular" evidence="1">
    <location>
        <begin position="374"/>
        <end position="376"/>
    </location>
</feature>
<feature type="transmembrane region" description="Helical" evidence="1">
    <location>
        <begin position="377"/>
        <end position="413"/>
    </location>
</feature>
<feature type="topological domain" description="Cytoplasmic" evidence="1">
    <location>
        <begin position="414"/>
        <end position="423"/>
    </location>
</feature>
<feature type="transmembrane region" description="Helical" evidence="1">
    <location>
        <begin position="424"/>
        <end position="450"/>
    </location>
</feature>
<feature type="topological domain" description="Extracellular" evidence="1">
    <location>
        <begin position="451"/>
        <end position="462"/>
    </location>
</feature>
<feature type="transmembrane region" description="Helical" evidence="1">
    <location>
        <begin position="463"/>
        <end position="486"/>
    </location>
</feature>
<feature type="topological domain" description="Cytoplasmic" evidence="1">
    <location>
        <begin position="487"/>
        <end position="523"/>
    </location>
</feature>
<feature type="region of interest" description="Disordered" evidence="3">
    <location>
        <begin position="504"/>
        <end position="523"/>
    </location>
</feature>
<feature type="glycosylation site" description="N-linked (GlcNAc...) asparagine" evidence="2">
    <location>
        <position position="214"/>
    </location>
</feature>
<feature type="glycosylation site" description="N-linked (GlcNAc...) asparagine" evidence="2">
    <location>
        <position position="225"/>
    </location>
</feature>
<feature type="disulfide bond" evidence="1">
    <location>
        <begin position="206"/>
        <end position="457"/>
    </location>
</feature>
<feature type="helix" evidence="6">
    <location>
        <begin position="37"/>
        <end position="46"/>
    </location>
</feature>
<feature type="helix" evidence="6">
    <location>
        <begin position="48"/>
        <end position="67"/>
    </location>
</feature>
<feature type="helix" evidence="6">
    <location>
        <begin position="73"/>
        <end position="99"/>
    </location>
</feature>
<feature type="helix" evidence="6">
    <location>
        <begin position="110"/>
        <end position="127"/>
    </location>
</feature>
<feature type="helix" evidence="6">
    <location>
        <begin position="137"/>
        <end position="161"/>
    </location>
</feature>
<feature type="helix" evidence="6">
    <location>
        <begin position="163"/>
        <end position="166"/>
    </location>
</feature>
<feature type="helix" evidence="6">
    <location>
        <begin position="170"/>
        <end position="199"/>
    </location>
</feature>
<feature type="helix" evidence="6">
    <location>
        <begin position="210"/>
        <end position="212"/>
    </location>
</feature>
<feature type="strand" evidence="6">
    <location>
        <begin position="216"/>
        <end position="218"/>
    </location>
</feature>
<feature type="strand" evidence="6">
    <location>
        <begin position="225"/>
        <end position="228"/>
    </location>
</feature>
<feature type="helix" evidence="6">
    <location>
        <begin position="233"/>
        <end position="261"/>
    </location>
</feature>
<feature type="turn" evidence="7">
    <location>
        <begin position="266"/>
        <end position="269"/>
    </location>
</feature>
<feature type="helix" evidence="6">
    <location>
        <begin position="275"/>
        <end position="287"/>
    </location>
</feature>
<feature type="helix" evidence="6">
    <location>
        <begin position="289"/>
        <end position="310"/>
    </location>
</feature>
<feature type="helix" evidence="6">
    <location>
        <begin position="313"/>
        <end position="318"/>
    </location>
</feature>
<feature type="turn" evidence="6">
    <location>
        <begin position="323"/>
        <end position="325"/>
    </location>
</feature>
<feature type="helix" evidence="6">
    <location>
        <begin position="326"/>
        <end position="350"/>
    </location>
</feature>
<feature type="helix" evidence="6">
    <location>
        <begin position="354"/>
        <end position="360"/>
    </location>
</feature>
<feature type="turn" evidence="9">
    <location>
        <begin position="361"/>
        <end position="363"/>
    </location>
</feature>
<feature type="helix" evidence="6">
    <location>
        <begin position="364"/>
        <end position="371"/>
    </location>
</feature>
<feature type="strand" evidence="8">
    <location>
        <begin position="373"/>
        <end position="375"/>
    </location>
</feature>
<feature type="helix" evidence="6">
    <location>
        <begin position="378"/>
        <end position="413"/>
    </location>
</feature>
<feature type="strand" evidence="6">
    <location>
        <begin position="418"/>
        <end position="420"/>
    </location>
</feature>
<feature type="helix" evidence="6">
    <location>
        <begin position="421"/>
        <end position="450"/>
    </location>
</feature>
<feature type="strand" evidence="6">
    <location>
        <begin position="456"/>
        <end position="458"/>
    </location>
</feature>
<feature type="helix" evidence="6">
    <location>
        <begin position="461"/>
        <end position="472"/>
    </location>
</feature>
<feature type="helix" evidence="6">
    <location>
        <begin position="474"/>
        <end position="487"/>
    </location>
</feature>
<feature type="turn" evidence="6">
    <location>
        <begin position="490"/>
        <end position="493"/>
    </location>
</feature>
<feature type="helix" evidence="6">
    <location>
        <begin position="494"/>
        <end position="506"/>
    </location>
</feature>
<gene>
    <name type="primary">mfsd2ab</name>
    <name type="synonym">nls1b</name>
    <name type="ORF">si:ch211-194e15.3</name>
    <name type="ORF">si:ch211-210b19.5</name>
</gene>